<organism>
    <name type="scientific">Conus litteratus</name>
    <name type="common">Lettered cone</name>
    <dbReference type="NCBI Taxonomy" id="89445"/>
    <lineage>
        <taxon>Eukaryota</taxon>
        <taxon>Metazoa</taxon>
        <taxon>Spiralia</taxon>
        <taxon>Lophotrochozoa</taxon>
        <taxon>Mollusca</taxon>
        <taxon>Gastropoda</taxon>
        <taxon>Caenogastropoda</taxon>
        <taxon>Neogastropoda</taxon>
        <taxon>Conoidea</taxon>
        <taxon>Conidae</taxon>
        <taxon>Conus</taxon>
        <taxon>Elisaconus</taxon>
    </lineage>
</organism>
<evidence type="ECO:0000250" key="1"/>
<evidence type="ECO:0000255" key="2"/>
<evidence type="ECO:0000303" key="3">
    <source>
    </source>
</evidence>
<evidence type="ECO:0000305" key="4"/>
<evidence type="ECO:0000305" key="5">
    <source>
    </source>
</evidence>
<evidence type="ECO:0000312" key="6">
    <source>
        <dbReference type="EMBL" id="ABC70194.1"/>
    </source>
</evidence>
<comment type="subcellular location">
    <subcellularLocation>
        <location evidence="5">Secreted</location>
    </subcellularLocation>
</comment>
<comment type="tissue specificity">
    <text evidence="5">Expressed by the venom duct.</text>
</comment>
<comment type="domain">
    <text evidence="4">The cysteine framework is V (CC-CC).</text>
</comment>
<comment type="PTM">
    <text evidence="4">Contains 2 disulfide bonds that can be either 'C1-C3, C2-C4' or 'C1-C4, C2-C3', since these disulfide connectivities have been observed for conotoxins with cysteine framework V (for examples, see AC P0DQQ7 and AC P81755).</text>
</comment>
<comment type="similarity">
    <text evidence="4">Belongs to the conotoxin T superfamily.</text>
</comment>
<keyword id="KW-1015">Disulfide bond</keyword>
<keyword id="KW-0964">Secreted</keyword>
<keyword id="KW-0732">Signal</keyword>
<keyword id="KW-0800">Toxin</keyword>
<name>CT57_CONLT</name>
<dbReference type="EMBL" id="DQ345358">
    <property type="protein sequence ID" value="ABC70194.1"/>
    <property type="molecule type" value="mRNA"/>
</dbReference>
<dbReference type="ConoServer" id="1145">
    <property type="toxin name" value="Lt5g precursor"/>
</dbReference>
<dbReference type="GO" id="GO:0005576">
    <property type="term" value="C:extracellular region"/>
    <property type="evidence" value="ECO:0007669"/>
    <property type="project" value="UniProtKB-SubCell"/>
</dbReference>
<dbReference type="GO" id="GO:0090729">
    <property type="term" value="F:toxin activity"/>
    <property type="evidence" value="ECO:0007669"/>
    <property type="project" value="UniProtKB-KW"/>
</dbReference>
<dbReference type="InterPro" id="IPR031565">
    <property type="entry name" value="T-conotoxin"/>
</dbReference>
<dbReference type="Pfam" id="PF16981">
    <property type="entry name" value="Chi-conotoxin"/>
    <property type="match status" value="1"/>
</dbReference>
<sequence length="69" mass="7295">MLCLPVFIILLLLASPAAPKSLETRIQNDLIRAGLTDADLKTEKGFLSGLLNVAGSVCCKVDTSCCSNQ</sequence>
<feature type="signal peptide" evidence="2">
    <location>
        <begin position="1"/>
        <end position="19"/>
    </location>
</feature>
<feature type="propeptide" id="PRO_0000315433" evidence="1">
    <location>
        <begin position="20"/>
        <end position="54"/>
    </location>
</feature>
<feature type="peptide" id="PRO_0000315434" description="Conotoxin Lt5.7">
    <location>
        <begin position="55"/>
        <end position="69"/>
    </location>
</feature>
<reference key="1">
    <citation type="journal article" date="2006" name="Genomics">
        <title>Diversity and evolution of conotoxins based on gene expression profiling of Conus litteratus.</title>
        <authorList>
            <person name="Pi C."/>
            <person name="Liu J."/>
            <person name="Peng C."/>
            <person name="Liu Y."/>
            <person name="Jiang X."/>
            <person name="Zhao Y."/>
            <person name="Tang S."/>
            <person name="Wang L."/>
            <person name="Dong M."/>
            <person name="Chen S."/>
            <person name="Xu A."/>
        </authorList>
    </citation>
    <scope>NUCLEOTIDE SEQUENCE [MRNA]</scope>
    <source>
        <tissue>Venom duct</tissue>
    </source>
</reference>
<protein>
    <recommendedName>
        <fullName evidence="3">Conotoxin Lt5.7</fullName>
    </recommendedName>
    <alternativeName>
        <fullName evidence="6">Lt5g</fullName>
    </alternativeName>
</protein>
<accession>Q1A3Q6</accession>
<proteinExistence type="inferred from homology"/>